<keyword id="KW-0456">Lyase</keyword>
<keyword id="KW-0533">Nickel</keyword>
<keyword id="KW-1185">Reference proteome</keyword>
<gene>
    <name evidence="1" type="primary">larC</name>
    <name type="ordered locus">CA_C0774</name>
</gene>
<proteinExistence type="inferred from homology"/>
<organism>
    <name type="scientific">Clostridium acetobutylicum (strain ATCC 824 / DSM 792 / JCM 1419 / IAM 19013 / LMG 5710 / NBRC 13948 / NRRL B-527 / VKM B-1787 / 2291 / W)</name>
    <dbReference type="NCBI Taxonomy" id="272562"/>
    <lineage>
        <taxon>Bacteria</taxon>
        <taxon>Bacillati</taxon>
        <taxon>Bacillota</taxon>
        <taxon>Clostridia</taxon>
        <taxon>Eubacteriales</taxon>
        <taxon>Clostridiaceae</taxon>
        <taxon>Clostridium</taxon>
    </lineage>
</organism>
<sequence>MRILYYDCFCGISGDMNLAALVDLGVPKKYLIDELLKLNLGSEYEIKIEKGQKLGITGTRVDVILKDEHHNKHELEEVLHNHEHKHNHHEIKNDEPAHSHEHHHRSLRDIEEIINSSTLNDKVKKLSLNIFMKVAEAEAKVHGRELYEVHFHEVGAVDSIVDIVGAAICIDYLKVDKILASRVQVGGGFVRCAHGIMPVPAPATVEILKNIPINTGIVQFETTTPTGAAILAANVKEFTQKLDFIIKKTAYGIGHRDLEIPNVLRVYLGEEESFQDIENQYILETNIDDMNPEIYGYVEEKLFKVGALDVFKTPICMKKGRPGIKLSVLTNEKSEREVLDVIFEETTSIGVRRYKVEKIMLKREFSKVKTEFGDITVKKAYYKGELVKYKPEYEECKDIAREKNVSIHKVYKAVYKQDLK</sequence>
<reference key="1">
    <citation type="journal article" date="2001" name="J. Bacteriol.">
        <title>Genome sequence and comparative analysis of the solvent-producing bacterium Clostridium acetobutylicum.</title>
        <authorList>
            <person name="Noelling J."/>
            <person name="Breton G."/>
            <person name="Omelchenko M.V."/>
            <person name="Makarova K.S."/>
            <person name="Zeng Q."/>
            <person name="Gibson R."/>
            <person name="Lee H.M."/>
            <person name="Dubois J."/>
            <person name="Qiu D."/>
            <person name="Hitti J."/>
            <person name="Wolf Y.I."/>
            <person name="Tatusov R.L."/>
            <person name="Sabathe F."/>
            <person name="Doucette-Stamm L.A."/>
            <person name="Soucaille P."/>
            <person name="Daly M.J."/>
            <person name="Bennett G.N."/>
            <person name="Koonin E.V."/>
            <person name="Smith D.R."/>
        </authorList>
    </citation>
    <scope>NUCLEOTIDE SEQUENCE [LARGE SCALE GENOMIC DNA]</scope>
    <source>
        <strain>ATCC 824 / DSM 792 / JCM 1419 / IAM 19013 / LMG 5710 / NBRC 13948 / NRRL B-527 / VKM B-1787 / 2291 / W</strain>
    </source>
</reference>
<protein>
    <recommendedName>
        <fullName evidence="1">Pyridinium-3,5-bisthiocarboxylic acid mononucleotide nickel insertion protein</fullName>
        <shortName evidence="1">P2TMN nickel insertion protein</shortName>
        <ecNumber evidence="1">4.99.1.12</ecNumber>
    </recommendedName>
    <alternativeName>
        <fullName evidence="1">Nickel-pincer cofactor biosynthesis protein LarC</fullName>
    </alternativeName>
</protein>
<accession>Q97KZ2</accession>
<comment type="function">
    <text evidence="1">Involved in the biosynthesis of a nickel-pincer cofactor ((SCS)Ni(II) pincer complex). Binds Ni(2+), and functions in nickel delivery to pyridinium-3,5-bisthiocarboxylic acid mononucleotide (P2TMN), to form the mature cofactor. Is thus probably required for the activation of nickel-pincer cofactor-dependent enzymes.</text>
</comment>
<comment type="catalytic activity">
    <reaction evidence="1">
        <text>Ni(II)-pyridinium-3,5-bisthiocarboxylate mononucleotide = pyridinium-3,5-bisthiocarboxylate mononucleotide + Ni(2+)</text>
        <dbReference type="Rhea" id="RHEA:54784"/>
        <dbReference type="ChEBI" id="CHEBI:49786"/>
        <dbReference type="ChEBI" id="CHEBI:137372"/>
        <dbReference type="ChEBI" id="CHEBI:137373"/>
        <dbReference type="EC" id="4.99.1.12"/>
    </reaction>
</comment>
<comment type="similarity">
    <text evidence="1">Belongs to the LarC family.</text>
</comment>
<name>LARC_CLOAB</name>
<evidence type="ECO:0000255" key="1">
    <source>
        <dbReference type="HAMAP-Rule" id="MF_01074"/>
    </source>
</evidence>
<evidence type="ECO:0000256" key="2">
    <source>
        <dbReference type="SAM" id="MobiDB-lite"/>
    </source>
</evidence>
<dbReference type="EC" id="4.99.1.12" evidence="1"/>
<dbReference type="EMBL" id="AE001437">
    <property type="protein sequence ID" value="AAK78750.1"/>
    <property type="molecule type" value="Genomic_DNA"/>
</dbReference>
<dbReference type="PIR" id="C96995">
    <property type="entry name" value="C96995"/>
</dbReference>
<dbReference type="RefSeq" id="NP_347410.1">
    <property type="nucleotide sequence ID" value="NC_003030.1"/>
</dbReference>
<dbReference type="RefSeq" id="WP_010964092.1">
    <property type="nucleotide sequence ID" value="NC_003030.1"/>
</dbReference>
<dbReference type="SMR" id="Q97KZ2"/>
<dbReference type="STRING" id="272562.CA_C0774"/>
<dbReference type="GeneID" id="44997285"/>
<dbReference type="KEGG" id="cac:CA_C0774"/>
<dbReference type="PATRIC" id="fig|272562.8.peg.979"/>
<dbReference type="eggNOG" id="COG1641">
    <property type="taxonomic scope" value="Bacteria"/>
</dbReference>
<dbReference type="HOGENOM" id="CLU_028523_2_1_9"/>
<dbReference type="OrthoDB" id="9765625at2"/>
<dbReference type="Proteomes" id="UP000000814">
    <property type="component" value="Chromosome"/>
</dbReference>
<dbReference type="GO" id="GO:0016829">
    <property type="term" value="F:lyase activity"/>
    <property type="evidence" value="ECO:0007669"/>
    <property type="project" value="UniProtKB-UniRule"/>
</dbReference>
<dbReference type="GO" id="GO:0016151">
    <property type="term" value="F:nickel cation binding"/>
    <property type="evidence" value="ECO:0007669"/>
    <property type="project" value="UniProtKB-UniRule"/>
</dbReference>
<dbReference type="GO" id="GO:0051604">
    <property type="term" value="P:protein maturation"/>
    <property type="evidence" value="ECO:0007669"/>
    <property type="project" value="UniProtKB-UniRule"/>
</dbReference>
<dbReference type="Gene3D" id="3.10.20.300">
    <property type="entry name" value="mk0293 like domain"/>
    <property type="match status" value="1"/>
</dbReference>
<dbReference type="Gene3D" id="3.30.70.1380">
    <property type="entry name" value="Transcriptional regulatory protein pf0864 domain like"/>
    <property type="match status" value="1"/>
</dbReference>
<dbReference type="HAMAP" id="MF_01074">
    <property type="entry name" value="LarC"/>
    <property type="match status" value="1"/>
</dbReference>
<dbReference type="InterPro" id="IPR002822">
    <property type="entry name" value="Ni_insertion"/>
</dbReference>
<dbReference type="NCBIfam" id="TIGR00299">
    <property type="entry name" value="nickel pincer cofactor biosynthesis protein LarC"/>
    <property type="match status" value="1"/>
</dbReference>
<dbReference type="PANTHER" id="PTHR36566">
    <property type="entry name" value="NICKEL INSERTION PROTEIN-RELATED"/>
    <property type="match status" value="1"/>
</dbReference>
<dbReference type="PANTHER" id="PTHR36566:SF1">
    <property type="entry name" value="PYRIDINIUM-3,5-BISTHIOCARBOXYLIC ACID MONONUCLEOTIDE NICKEL INSERTION PROTEIN"/>
    <property type="match status" value="1"/>
</dbReference>
<dbReference type="Pfam" id="PF01969">
    <property type="entry name" value="Ni_insertion"/>
    <property type="match status" value="1"/>
</dbReference>
<feature type="chain" id="PRO_0000146843" description="Pyridinium-3,5-bisthiocarboxylic acid mononucleotide nickel insertion protein">
    <location>
        <begin position="1"/>
        <end position="420"/>
    </location>
</feature>
<feature type="region of interest" description="Disordered" evidence="2">
    <location>
        <begin position="81"/>
        <end position="104"/>
    </location>
</feature>
<feature type="compositionally biased region" description="Basic and acidic residues" evidence="2">
    <location>
        <begin position="90"/>
        <end position="99"/>
    </location>
</feature>